<proteinExistence type="inferred from homology"/>
<keyword id="KW-0131">Cell cycle</keyword>
<keyword id="KW-0132">Cell division</keyword>
<keyword id="KW-0133">Cell shape</keyword>
<keyword id="KW-0961">Cell wall biogenesis/degradation</keyword>
<keyword id="KW-0963">Cytoplasm</keyword>
<keyword id="KW-0274">FAD</keyword>
<keyword id="KW-0285">Flavoprotein</keyword>
<keyword id="KW-0521">NADP</keyword>
<keyword id="KW-0560">Oxidoreductase</keyword>
<keyword id="KW-0573">Peptidoglycan synthesis</keyword>
<gene>
    <name evidence="1" type="primary">murB</name>
    <name type="ordered locus">CLD_1130</name>
</gene>
<sequence length="306" mass="33660">MNQYKNFIMQFEDIVGNNNVLIDEPMKKHTSFKVGGPADLLITPTTLEQVKDSIILCRNNSIPYYIIGNGSNLLVRDGGIRGVVIKFLKLGDIKVEGDRVIAQSGAPLTNICNEALKSNLGGLEFACGIPGSVGGAVTMNAGAYNGEISQVIESAKVIDKDGNVFLLNKEQLDLGYRMSAIQKYHYIVLEVTFKLHNSEYDTIKNRIMDLNRRRIEKQPLEYPSAGSTFKRPEGHFAAKLIEDTGLKGESIGGAQVSEKHSGFIINKGGATAGDILNLIEFVQNKVMEKFQVDLHTEVRIIGEENN</sequence>
<protein>
    <recommendedName>
        <fullName evidence="1">UDP-N-acetylenolpyruvoylglucosamine reductase</fullName>
        <ecNumber evidence="1">1.3.1.98</ecNumber>
    </recommendedName>
    <alternativeName>
        <fullName evidence="1">UDP-N-acetylmuramate dehydrogenase</fullName>
    </alternativeName>
</protein>
<comment type="function">
    <text evidence="1">Cell wall formation.</text>
</comment>
<comment type="catalytic activity">
    <reaction evidence="1">
        <text>UDP-N-acetyl-alpha-D-muramate + NADP(+) = UDP-N-acetyl-3-O-(1-carboxyvinyl)-alpha-D-glucosamine + NADPH + H(+)</text>
        <dbReference type="Rhea" id="RHEA:12248"/>
        <dbReference type="ChEBI" id="CHEBI:15378"/>
        <dbReference type="ChEBI" id="CHEBI:57783"/>
        <dbReference type="ChEBI" id="CHEBI:58349"/>
        <dbReference type="ChEBI" id="CHEBI:68483"/>
        <dbReference type="ChEBI" id="CHEBI:70757"/>
        <dbReference type="EC" id="1.3.1.98"/>
    </reaction>
</comment>
<comment type="cofactor">
    <cofactor evidence="1">
        <name>FAD</name>
        <dbReference type="ChEBI" id="CHEBI:57692"/>
    </cofactor>
</comment>
<comment type="pathway">
    <text evidence="1">Cell wall biogenesis; peptidoglycan biosynthesis.</text>
</comment>
<comment type="subcellular location">
    <subcellularLocation>
        <location evidence="1">Cytoplasm</location>
    </subcellularLocation>
</comment>
<comment type="similarity">
    <text evidence="1">Belongs to the MurB family.</text>
</comment>
<reference key="1">
    <citation type="journal article" date="2007" name="PLoS ONE">
        <title>Analysis of the neurotoxin complex genes in Clostridium botulinum A1-A4 and B1 strains: BoNT/A3, /Ba4 and /B1 clusters are located within plasmids.</title>
        <authorList>
            <person name="Smith T.J."/>
            <person name="Hill K.K."/>
            <person name="Foley B.T."/>
            <person name="Detter J.C."/>
            <person name="Munk A.C."/>
            <person name="Bruce D.C."/>
            <person name="Doggett N.A."/>
            <person name="Smith L.A."/>
            <person name="Marks J.D."/>
            <person name="Xie G."/>
            <person name="Brettin T.S."/>
        </authorList>
    </citation>
    <scope>NUCLEOTIDE SEQUENCE [LARGE SCALE GENOMIC DNA]</scope>
    <source>
        <strain>Okra / Type B1</strain>
    </source>
</reference>
<name>MURB_CLOBK</name>
<organism>
    <name type="scientific">Clostridium botulinum (strain Okra / Type B1)</name>
    <dbReference type="NCBI Taxonomy" id="498213"/>
    <lineage>
        <taxon>Bacteria</taxon>
        <taxon>Bacillati</taxon>
        <taxon>Bacillota</taxon>
        <taxon>Clostridia</taxon>
        <taxon>Eubacteriales</taxon>
        <taxon>Clostridiaceae</taxon>
        <taxon>Clostridium</taxon>
    </lineage>
</organism>
<accession>B1IFW4</accession>
<evidence type="ECO:0000255" key="1">
    <source>
        <dbReference type="HAMAP-Rule" id="MF_00037"/>
    </source>
</evidence>
<dbReference type="EC" id="1.3.1.98" evidence="1"/>
<dbReference type="EMBL" id="CP000939">
    <property type="protein sequence ID" value="ACA45082.1"/>
    <property type="molecule type" value="Genomic_DNA"/>
</dbReference>
<dbReference type="RefSeq" id="WP_003401458.1">
    <property type="nucleotide sequence ID" value="NC_010516.1"/>
</dbReference>
<dbReference type="SMR" id="B1IFW4"/>
<dbReference type="KEGG" id="cbb:CLD_1130"/>
<dbReference type="HOGENOM" id="CLU_035304_1_1_9"/>
<dbReference type="UniPathway" id="UPA00219"/>
<dbReference type="Proteomes" id="UP000008541">
    <property type="component" value="Chromosome"/>
</dbReference>
<dbReference type="GO" id="GO:0005829">
    <property type="term" value="C:cytosol"/>
    <property type="evidence" value="ECO:0007669"/>
    <property type="project" value="TreeGrafter"/>
</dbReference>
<dbReference type="GO" id="GO:0071949">
    <property type="term" value="F:FAD binding"/>
    <property type="evidence" value="ECO:0007669"/>
    <property type="project" value="InterPro"/>
</dbReference>
<dbReference type="GO" id="GO:0008762">
    <property type="term" value="F:UDP-N-acetylmuramate dehydrogenase activity"/>
    <property type="evidence" value="ECO:0007669"/>
    <property type="project" value="UniProtKB-UniRule"/>
</dbReference>
<dbReference type="GO" id="GO:0051301">
    <property type="term" value="P:cell division"/>
    <property type="evidence" value="ECO:0007669"/>
    <property type="project" value="UniProtKB-KW"/>
</dbReference>
<dbReference type="GO" id="GO:0071555">
    <property type="term" value="P:cell wall organization"/>
    <property type="evidence" value="ECO:0007669"/>
    <property type="project" value="UniProtKB-KW"/>
</dbReference>
<dbReference type="GO" id="GO:0009252">
    <property type="term" value="P:peptidoglycan biosynthetic process"/>
    <property type="evidence" value="ECO:0007669"/>
    <property type="project" value="UniProtKB-UniRule"/>
</dbReference>
<dbReference type="GO" id="GO:0008360">
    <property type="term" value="P:regulation of cell shape"/>
    <property type="evidence" value="ECO:0007669"/>
    <property type="project" value="UniProtKB-KW"/>
</dbReference>
<dbReference type="Gene3D" id="3.30.465.10">
    <property type="match status" value="1"/>
</dbReference>
<dbReference type="Gene3D" id="3.90.78.10">
    <property type="entry name" value="UDP-N-acetylenolpyruvoylglucosamine reductase, C-terminal domain"/>
    <property type="match status" value="1"/>
</dbReference>
<dbReference type="Gene3D" id="3.30.43.10">
    <property type="entry name" value="Uridine Diphospho-n-acetylenolpyruvylglucosamine Reductase, domain 2"/>
    <property type="match status" value="1"/>
</dbReference>
<dbReference type="HAMAP" id="MF_00037">
    <property type="entry name" value="MurB"/>
    <property type="match status" value="1"/>
</dbReference>
<dbReference type="InterPro" id="IPR016166">
    <property type="entry name" value="FAD-bd_PCMH"/>
</dbReference>
<dbReference type="InterPro" id="IPR036318">
    <property type="entry name" value="FAD-bd_PCMH-like_sf"/>
</dbReference>
<dbReference type="InterPro" id="IPR016167">
    <property type="entry name" value="FAD-bd_PCMH_sub1"/>
</dbReference>
<dbReference type="InterPro" id="IPR016169">
    <property type="entry name" value="FAD-bd_PCMH_sub2"/>
</dbReference>
<dbReference type="InterPro" id="IPR003170">
    <property type="entry name" value="MurB"/>
</dbReference>
<dbReference type="InterPro" id="IPR011601">
    <property type="entry name" value="MurB_C"/>
</dbReference>
<dbReference type="InterPro" id="IPR036635">
    <property type="entry name" value="MurB_C_sf"/>
</dbReference>
<dbReference type="InterPro" id="IPR006094">
    <property type="entry name" value="Oxid_FAD_bind_N"/>
</dbReference>
<dbReference type="NCBIfam" id="TIGR00179">
    <property type="entry name" value="murB"/>
    <property type="match status" value="1"/>
</dbReference>
<dbReference type="NCBIfam" id="NF010480">
    <property type="entry name" value="PRK13905.1"/>
    <property type="match status" value="1"/>
</dbReference>
<dbReference type="PANTHER" id="PTHR21071">
    <property type="entry name" value="UDP-N-ACETYLENOLPYRUVOYLGLUCOSAMINE REDUCTASE"/>
    <property type="match status" value="1"/>
</dbReference>
<dbReference type="PANTHER" id="PTHR21071:SF4">
    <property type="entry name" value="UDP-N-ACETYLENOLPYRUVOYLGLUCOSAMINE REDUCTASE"/>
    <property type="match status" value="1"/>
</dbReference>
<dbReference type="Pfam" id="PF01565">
    <property type="entry name" value="FAD_binding_4"/>
    <property type="match status" value="1"/>
</dbReference>
<dbReference type="Pfam" id="PF02873">
    <property type="entry name" value="MurB_C"/>
    <property type="match status" value="1"/>
</dbReference>
<dbReference type="SUPFAM" id="SSF56176">
    <property type="entry name" value="FAD-binding/transporter-associated domain-like"/>
    <property type="match status" value="1"/>
</dbReference>
<dbReference type="SUPFAM" id="SSF56194">
    <property type="entry name" value="Uridine diphospho-N-Acetylenolpyruvylglucosamine reductase, MurB, C-terminal domain"/>
    <property type="match status" value="1"/>
</dbReference>
<dbReference type="PROSITE" id="PS51387">
    <property type="entry name" value="FAD_PCMH"/>
    <property type="match status" value="1"/>
</dbReference>
<feature type="chain" id="PRO_1000191417" description="UDP-N-acetylenolpyruvoylglucosamine reductase">
    <location>
        <begin position="1"/>
        <end position="306"/>
    </location>
</feature>
<feature type="domain" description="FAD-binding PCMH-type" evidence="1">
    <location>
        <begin position="34"/>
        <end position="198"/>
    </location>
</feature>
<feature type="active site" evidence="1">
    <location>
        <position position="177"/>
    </location>
</feature>
<feature type="active site" description="Proton donor" evidence="1">
    <location>
        <position position="227"/>
    </location>
</feature>
<feature type="active site" evidence="1">
    <location>
        <position position="297"/>
    </location>
</feature>